<dbReference type="EMBL" id="AB369552">
    <property type="protein sequence ID" value="BAF96746.1"/>
    <property type="molecule type" value="mRNA"/>
</dbReference>
<dbReference type="EMBL" id="AB369553">
    <property type="protein sequence ID" value="BAF96747.1"/>
    <property type="molecule type" value="mRNA"/>
</dbReference>
<dbReference type="EMBL" id="AE013599">
    <property type="protein sequence ID" value="AAF58631.1"/>
    <property type="molecule type" value="Genomic_DNA"/>
</dbReference>
<dbReference type="EMBL" id="AE013599">
    <property type="protein sequence ID" value="AAF58632.2"/>
    <property type="molecule type" value="Genomic_DNA"/>
</dbReference>
<dbReference type="EMBL" id="BT003466">
    <property type="protein sequence ID" value="AAO39469.1"/>
    <property type="status" value="ALT_SEQ"/>
    <property type="molecule type" value="mRNA"/>
</dbReference>
<dbReference type="EMBL" id="BT010286">
    <property type="protein sequence ID" value="AAQ23604.1"/>
    <property type="molecule type" value="mRNA"/>
</dbReference>
<dbReference type="RefSeq" id="NP_610693.1">
    <molecule id="A1Z8N1-1"/>
    <property type="nucleotide sequence ID" value="NM_136849.2"/>
</dbReference>
<dbReference type="RefSeq" id="NP_725068.1">
    <molecule id="A1Z8N1-2"/>
    <property type="nucleotide sequence ID" value="NM_165845.2"/>
</dbReference>
<dbReference type="SMR" id="A1Z8N1"/>
<dbReference type="BioGRID" id="62035">
    <property type="interactions" value="4"/>
</dbReference>
<dbReference type="FunCoup" id="A1Z8N1">
    <property type="interactions" value="174"/>
</dbReference>
<dbReference type="IntAct" id="A1Z8N1">
    <property type="interactions" value="5"/>
</dbReference>
<dbReference type="STRING" id="7227.FBpp0087178"/>
<dbReference type="TCDB" id="2.A.1.1.99">
    <property type="family name" value="the major facilitator superfamily (mfs)"/>
</dbReference>
<dbReference type="GlyCosmos" id="A1Z8N1">
    <property type="glycosylation" value="2 sites, No reported glycans"/>
</dbReference>
<dbReference type="GlyGen" id="A1Z8N1">
    <property type="glycosylation" value="2 sites"/>
</dbReference>
<dbReference type="iPTMnet" id="A1Z8N1"/>
<dbReference type="PaxDb" id="7227-FBpp0087178"/>
<dbReference type="DNASU" id="36248"/>
<dbReference type="EnsemblMetazoa" id="FBtr0088073">
    <molecule id="A1Z8N1-1"/>
    <property type="protein sequence ID" value="FBpp0087178"/>
    <property type="gene ID" value="FBgn0050035"/>
</dbReference>
<dbReference type="EnsemblMetazoa" id="FBtr0088074">
    <molecule id="A1Z8N1-2"/>
    <property type="protein sequence ID" value="FBpp0087179"/>
    <property type="gene ID" value="FBgn0050035"/>
</dbReference>
<dbReference type="GeneID" id="36248"/>
<dbReference type="KEGG" id="dme:Dmel_CG30035"/>
<dbReference type="UCSC" id="CG30035-RA">
    <molecule id="A1Z8N1-1"/>
    <property type="organism name" value="d. melanogaster"/>
</dbReference>
<dbReference type="UCSC" id="CG30035-RB">
    <property type="organism name" value="d. melanogaster"/>
</dbReference>
<dbReference type="AGR" id="FB:FBgn0050035"/>
<dbReference type="CTD" id="36248"/>
<dbReference type="FlyBase" id="FBgn0050035">
    <property type="gene designation" value="Tret1"/>
</dbReference>
<dbReference type="VEuPathDB" id="VectorBase:FBgn0050035"/>
<dbReference type="eggNOG" id="KOG0254">
    <property type="taxonomic scope" value="Eukaryota"/>
</dbReference>
<dbReference type="GeneTree" id="ENSGT00940000173941"/>
<dbReference type="HOGENOM" id="CLU_016710_0_0_1"/>
<dbReference type="InParanoid" id="A1Z8N1"/>
<dbReference type="OMA" id="IFIWTQS"/>
<dbReference type="OrthoDB" id="6339427at2759"/>
<dbReference type="PhylomeDB" id="A1Z8N1"/>
<dbReference type="Reactome" id="R-DME-189200">
    <property type="pathway name" value="Cellular hexose transport"/>
</dbReference>
<dbReference type="SABIO-RK" id="A1Z8N1"/>
<dbReference type="BioGRID-ORCS" id="36248">
    <property type="hits" value="0 hits in 3 CRISPR screens"/>
</dbReference>
<dbReference type="ChiTaRS" id="Tret1-1">
    <property type="organism name" value="fly"/>
</dbReference>
<dbReference type="GenomeRNAi" id="36248"/>
<dbReference type="PRO" id="PR:A1Z8N1"/>
<dbReference type="Proteomes" id="UP000000803">
    <property type="component" value="Chromosome 2R"/>
</dbReference>
<dbReference type="Bgee" id="FBgn0050035">
    <property type="expression patterns" value="Expressed in fat body cell in haltere and 175 other cell types or tissues"/>
</dbReference>
<dbReference type="GO" id="GO:0016020">
    <property type="term" value="C:membrane"/>
    <property type="evidence" value="ECO:0000314"/>
    <property type="project" value="FlyBase"/>
</dbReference>
<dbReference type="GO" id="GO:0005886">
    <property type="term" value="C:plasma membrane"/>
    <property type="evidence" value="ECO:0000314"/>
    <property type="project" value="UniProtKB"/>
</dbReference>
<dbReference type="GO" id="GO:0031982">
    <property type="term" value="C:vesicle"/>
    <property type="evidence" value="ECO:0007669"/>
    <property type="project" value="UniProtKB-SubCell"/>
</dbReference>
<dbReference type="GO" id="GO:0055056">
    <property type="term" value="F:D-glucose transmembrane transporter activity"/>
    <property type="evidence" value="ECO:0000314"/>
    <property type="project" value="UniProtKB"/>
</dbReference>
<dbReference type="GO" id="GO:0022857">
    <property type="term" value="F:transmembrane transporter activity"/>
    <property type="evidence" value="ECO:0000318"/>
    <property type="project" value="GO_Central"/>
</dbReference>
<dbReference type="GO" id="GO:0015574">
    <property type="term" value="F:trehalose transmembrane transporter activity"/>
    <property type="evidence" value="ECO:0000314"/>
    <property type="project" value="UniProtKB"/>
</dbReference>
<dbReference type="GO" id="GO:1904659">
    <property type="term" value="P:D-glucose transmembrane transport"/>
    <property type="evidence" value="ECO:0000314"/>
    <property type="project" value="UniProtKB"/>
</dbReference>
<dbReference type="GO" id="GO:0055085">
    <property type="term" value="P:transmembrane transport"/>
    <property type="evidence" value="ECO:0000318"/>
    <property type="project" value="GO_Central"/>
</dbReference>
<dbReference type="GO" id="GO:0015771">
    <property type="term" value="P:trehalose transport"/>
    <property type="evidence" value="ECO:0000314"/>
    <property type="project" value="UniProtKB"/>
</dbReference>
<dbReference type="CDD" id="cd17358">
    <property type="entry name" value="MFS_GLUT6_8_Class3_like"/>
    <property type="match status" value="1"/>
</dbReference>
<dbReference type="FunFam" id="1.20.1250.20:FF:000055">
    <property type="entry name" value="Facilitated trehalose transporter Tret1-2 homolog"/>
    <property type="match status" value="1"/>
</dbReference>
<dbReference type="Gene3D" id="1.20.1250.20">
    <property type="entry name" value="MFS general substrate transporter like domains"/>
    <property type="match status" value="1"/>
</dbReference>
<dbReference type="InterPro" id="IPR020846">
    <property type="entry name" value="MFS_dom"/>
</dbReference>
<dbReference type="InterPro" id="IPR044775">
    <property type="entry name" value="MFS_ERD6/Tret1-like"/>
</dbReference>
<dbReference type="InterPro" id="IPR005828">
    <property type="entry name" value="MFS_sugar_transport-like"/>
</dbReference>
<dbReference type="InterPro" id="IPR036259">
    <property type="entry name" value="MFS_trans_sf"/>
</dbReference>
<dbReference type="InterPro" id="IPR050549">
    <property type="entry name" value="MFS_Trehalose_Transporter"/>
</dbReference>
<dbReference type="InterPro" id="IPR003663">
    <property type="entry name" value="Sugar/inositol_transpt"/>
</dbReference>
<dbReference type="InterPro" id="IPR005829">
    <property type="entry name" value="Sugar_transporter_CS"/>
</dbReference>
<dbReference type="NCBIfam" id="TIGR00879">
    <property type="entry name" value="SP"/>
    <property type="match status" value="1"/>
</dbReference>
<dbReference type="PANTHER" id="PTHR48021">
    <property type="match status" value="1"/>
</dbReference>
<dbReference type="PANTHER" id="PTHR48021:SF96">
    <property type="entry name" value="FACILITATED TREHALOSE TRANSPORTER TRET1-1-RELATED"/>
    <property type="match status" value="1"/>
</dbReference>
<dbReference type="Pfam" id="PF00083">
    <property type="entry name" value="Sugar_tr"/>
    <property type="match status" value="1"/>
</dbReference>
<dbReference type="PRINTS" id="PR00171">
    <property type="entry name" value="SUGRTRNSPORT"/>
</dbReference>
<dbReference type="SUPFAM" id="SSF103473">
    <property type="entry name" value="MFS general substrate transporter"/>
    <property type="match status" value="1"/>
</dbReference>
<dbReference type="PROSITE" id="PS50850">
    <property type="entry name" value="MFS"/>
    <property type="match status" value="1"/>
</dbReference>
<dbReference type="PROSITE" id="PS00216">
    <property type="entry name" value="SUGAR_TRANSPORT_1"/>
    <property type="match status" value="2"/>
</dbReference>
<dbReference type="PROSITE" id="PS00217">
    <property type="entry name" value="SUGAR_TRANSPORT_2"/>
    <property type="match status" value="1"/>
</dbReference>
<proteinExistence type="evidence at protein level"/>
<protein>
    <recommendedName>
        <fullName evidence="16">Trehalose transporter 1</fullName>
    </recommendedName>
    <alternativeName>
        <fullName evidence="10">Facilitated trehalose transporter Tret1-1</fullName>
        <shortName evidence="10">DmTret1-1</shortName>
    </alternativeName>
</protein>
<feature type="chain" id="PRO_0000395531" description="Trehalose transporter 1">
    <location>
        <begin position="1"/>
        <end position="857"/>
    </location>
</feature>
<feature type="topological domain" description="Cytoplasmic" evidence="1">
    <location>
        <begin position="1"/>
        <end position="392"/>
    </location>
</feature>
<feature type="transmembrane region" description="Helical; Name=1" evidence="1">
    <location>
        <begin position="393"/>
        <end position="413"/>
    </location>
</feature>
<feature type="topological domain" description="Extracellular" evidence="1">
    <location>
        <begin position="414"/>
        <end position="440"/>
    </location>
</feature>
<feature type="transmembrane region" description="Helical; Name=2" evidence="1">
    <location>
        <begin position="441"/>
        <end position="461"/>
    </location>
</feature>
<feature type="topological domain" description="Cytoplasmic" evidence="1">
    <location>
        <begin position="462"/>
        <end position="473"/>
    </location>
</feature>
<feature type="transmembrane region" description="Helical; Name=3" evidence="1">
    <location>
        <begin position="474"/>
        <end position="494"/>
    </location>
</feature>
<feature type="topological domain" description="Extracellular" evidence="1">
    <location>
        <begin position="495"/>
        <end position="497"/>
    </location>
</feature>
<feature type="transmembrane region" description="Helical; Name=4" evidence="1">
    <location>
        <begin position="498"/>
        <end position="518"/>
    </location>
</feature>
<feature type="topological domain" description="Cytoplasmic" evidence="1">
    <location>
        <begin position="519"/>
        <end position="528"/>
    </location>
</feature>
<feature type="transmembrane region" description="Helical; Name=5" evidence="1">
    <location>
        <begin position="529"/>
        <end position="549"/>
    </location>
</feature>
<feature type="topological domain" description="Extracellular" evidence="1">
    <location>
        <begin position="550"/>
        <end position="552"/>
    </location>
</feature>
<feature type="transmembrane region" description="Helical; Name=6" evidence="1">
    <location>
        <begin position="553"/>
        <end position="573"/>
    </location>
</feature>
<feature type="topological domain" description="Cytoplasmic" evidence="1">
    <location>
        <begin position="574"/>
        <end position="636"/>
    </location>
</feature>
<feature type="transmembrane region" description="Helical; Name=7" evidence="1">
    <location>
        <begin position="637"/>
        <end position="657"/>
    </location>
</feature>
<feature type="topological domain" description="Extracellular" evidence="1">
    <location>
        <begin position="658"/>
        <end position="673"/>
    </location>
</feature>
<feature type="transmembrane region" description="Helical; Name=8" evidence="1">
    <location>
        <begin position="674"/>
        <end position="694"/>
    </location>
</feature>
<feature type="topological domain" description="Cytoplasmic" evidence="1">
    <location>
        <begin position="695"/>
        <end position="700"/>
    </location>
</feature>
<feature type="transmembrane region" description="Helical; Name=9" evidence="1">
    <location>
        <begin position="701"/>
        <end position="721"/>
    </location>
</feature>
<feature type="topological domain" description="Extracellular" evidence="1">
    <location>
        <begin position="722"/>
        <end position="740"/>
    </location>
</feature>
<feature type="transmembrane region" description="Helical; Name=10" evidence="1">
    <location>
        <begin position="741"/>
        <end position="761"/>
    </location>
</feature>
<feature type="topological domain" description="Cytoplasmic" evidence="1">
    <location>
        <begin position="762"/>
        <end position="767"/>
    </location>
</feature>
<feature type="transmembrane region" description="Helical; Name=11" evidence="1">
    <location>
        <begin position="768"/>
        <end position="788"/>
    </location>
</feature>
<feature type="topological domain" description="Extracellular" evidence="1">
    <location>
        <begin position="789"/>
        <end position="801"/>
    </location>
</feature>
<feature type="transmembrane region" description="Helical; Name=12" evidence="1">
    <location>
        <begin position="802"/>
        <end position="822"/>
    </location>
</feature>
<feature type="topological domain" description="Cytoplasmic" evidence="1">
    <location>
        <begin position="823"/>
        <end position="857"/>
    </location>
</feature>
<feature type="region of interest" description="Disordered" evidence="3">
    <location>
        <begin position="1"/>
        <end position="28"/>
    </location>
</feature>
<feature type="region of interest" description="Disordered" evidence="3">
    <location>
        <begin position="62"/>
        <end position="202"/>
    </location>
</feature>
<feature type="region of interest" description="Disordered" evidence="3">
    <location>
        <begin position="249"/>
        <end position="269"/>
    </location>
</feature>
<feature type="region of interest" description="Disordered" evidence="3">
    <location>
        <begin position="280"/>
        <end position="299"/>
    </location>
</feature>
<feature type="region of interest" description="Disordered" evidence="3">
    <location>
        <begin position="327"/>
        <end position="346"/>
    </location>
</feature>
<feature type="compositionally biased region" description="Polar residues" evidence="3">
    <location>
        <begin position="69"/>
        <end position="81"/>
    </location>
</feature>
<feature type="compositionally biased region" description="Basic and acidic residues" evidence="3">
    <location>
        <begin position="134"/>
        <end position="143"/>
    </location>
</feature>
<feature type="compositionally biased region" description="Polar residues" evidence="3">
    <location>
        <begin position="171"/>
        <end position="181"/>
    </location>
</feature>
<feature type="compositionally biased region" description="Polar residues" evidence="3">
    <location>
        <begin position="330"/>
        <end position="341"/>
    </location>
</feature>
<feature type="modified residue" description="Phosphoserine" evidence="5">
    <location>
        <position position="248"/>
    </location>
</feature>
<feature type="modified residue" description="Phosphoserine" evidence="5">
    <location>
        <position position="249"/>
    </location>
</feature>
<feature type="modified residue" description="Phosphoserine" evidence="5">
    <location>
        <position position="250"/>
    </location>
</feature>
<feature type="modified residue" description="Phosphoserine" evidence="5">
    <location>
        <position position="320"/>
    </location>
</feature>
<feature type="modified residue" description="Phosphoserine" evidence="5">
    <location>
        <position position="322"/>
    </location>
</feature>
<feature type="modified residue" description="Phosphoserine" evidence="5">
    <location>
        <position position="845"/>
    </location>
</feature>
<feature type="modified residue" description="Phosphoserine" evidence="5">
    <location>
        <position position="846"/>
    </location>
</feature>
<feature type="glycosylation site" description="N-linked (GlcNAc...) asparagine" evidence="2">
    <location>
        <position position="428"/>
    </location>
</feature>
<feature type="glycosylation site" description="N-linked (GlcNAc...) asparagine" evidence="2">
    <location>
        <position position="550"/>
    </location>
</feature>
<feature type="splice variant" id="VSP_039515" description="In isoform B." evidence="9 10 11">
    <original>MSGRDNRGAGGGGGGHQPLSNAMGKLK</original>
    <variation>MKILMRADTHVSFSVPVEEPKAICTFS</variation>
    <location>
        <begin position="1"/>
        <end position="27"/>
    </location>
</feature>
<feature type="splice variant" id="VSP_039516" description="In isoform B." evidence="9 10 11">
    <location>
        <begin position="28"/>
        <end position="395"/>
    </location>
</feature>
<feature type="modified residue" description="Phosphothreonine" evidence="18">
    <location sequence="A1Z8N1-2">
        <position position="9"/>
    </location>
</feature>
<feature type="modified residue" description="Phosphoserine" evidence="18">
    <location sequence="A1Z8N1-2">
        <position position="12"/>
    </location>
</feature>
<keyword id="KW-0025">Alternative splicing</keyword>
<keyword id="KW-1003">Cell membrane</keyword>
<keyword id="KW-0325">Glycoprotein</keyword>
<keyword id="KW-0472">Membrane</keyword>
<keyword id="KW-0597">Phosphoprotein</keyword>
<keyword id="KW-1185">Reference proteome</keyword>
<keyword id="KW-0762">Sugar transport</keyword>
<keyword id="KW-0812">Transmembrane</keyword>
<keyword id="KW-1133">Transmembrane helix</keyword>
<keyword id="KW-0813">Transport</keyword>
<organism evidence="17">
    <name type="scientific">Drosophila melanogaster</name>
    <name type="common">Fruit fly</name>
    <dbReference type="NCBI Taxonomy" id="7227"/>
    <lineage>
        <taxon>Eukaryota</taxon>
        <taxon>Metazoa</taxon>
        <taxon>Ecdysozoa</taxon>
        <taxon>Arthropoda</taxon>
        <taxon>Hexapoda</taxon>
        <taxon>Insecta</taxon>
        <taxon>Pterygota</taxon>
        <taxon>Neoptera</taxon>
        <taxon>Endopterygota</taxon>
        <taxon>Diptera</taxon>
        <taxon>Brachycera</taxon>
        <taxon>Muscomorpha</taxon>
        <taxon>Ephydroidea</taxon>
        <taxon>Drosophilidae</taxon>
        <taxon>Drosophila</taxon>
        <taxon>Sophophora</taxon>
    </lineage>
</organism>
<accession>A1Z8N1</accession>
<accession>A9ZSY5</accession>
<accession>Q6NQZ8</accession>
<accession>Q86P59</accession>
<sequence>MSGRDNRGAGGGGGGHQPLSNAMGKLKEKLTRVGDELGYHRVESNLSTSNTATSLDTILPEDPFLFPQVSPQRHPQNTVRTQRLLEDEPPLSFRPLLEDDDINEPPTQQQQRTPLRASGSLELTPLPPPPTSLEIREHRDRQQRGAQGDELQRSKQSLKGSRVSFERRDTGNSNTNSNKAAESSDEDSFEEKRTGFQQQKATSVDHKGILKDLKHILANDNRRQFQAKKHVSLDVKGTRFLQDLLKESSSEEEFHKTRREFQGRKHQSLDPRVTFKLDKVLQGSSTDSDEEGEDAEHKRLIHRPKDITKPVIIDLKDLESESDEDFLTSRQHFQQQRSISTDSRKSRRLYEMDEMDNKRGENIRHAVPFVRQITEDGKPKLEVYRPTTNPIYIWTQVLAALSVSLGSLVVGFVSAYTSPALVSMTDRNITSFEVTQDAGSWVGGIMPLAGLAGGIAGGPLIEYLGRRNTILATAVPFIVSSLLIACAVNVAMVLCGRFLAGFCVGIASLSLPVYLGETVQPEVRGTLGLLPTAFGNIGILLCFVAGSFMNWSMLAFLGAALPVPFLILMFLIPETPRWFVGRGLEERARKALKWLRGKEADVEPELKGLMRSQADADRQASRNTMLELLKLNNLKPLSISLGLMFFQQFSGINAVIFYTVQIFKDAGSTIDGNLCTIIVGIVNFLATFIGIVLIDRAGRKILLYVSDIAMVLTLFVLGGFFYCKTYGPDVSHLGWLPLTCFVIYILGFSLGFGPIPWLMMGEILPAKIRGSAASVATAFNWFCTFVVTKTFQDLTVAMGAHGAFWLFGAICFVGLFFVIIYVPETQGKTLEDIERKMMGRVRRMSSVANIKPLSFNM</sequence>
<reference evidence="12 15" key="1">
    <citation type="journal article" date="2010" name="Insect Biochem. Mol. Biol.">
        <title>The trehalose transporter 1 gene sequence is conserved in insects and encodes proteins with different kinetic properties involved in trehalose import into peripheral tissues.</title>
        <authorList>
            <person name="Kanamori Y."/>
            <person name="Saito Y."/>
            <person name="Hagiwara-Komoda Y."/>
            <person name="Tanaka D."/>
            <person name="Mitsumasu K."/>
            <person name="Kikuta S."/>
            <person name="Watanabe M."/>
            <person name="Cornette R."/>
            <person name="Kikawada T."/>
            <person name="Okuda T."/>
        </authorList>
    </citation>
    <scope>NUCLEOTIDE SEQUENCE [MRNA] (ISOFORM B)</scope>
    <scope>NUCLEOTIDE SEQUENCE [MRNA] OF 352-857 (ISOFORM A)</scope>
    <scope>FUNCTION</scope>
    <scope>CATALYTIC ACTIVITY</scope>
    <scope>BIOPHYSICOCHEMICAL PROPERTIES</scope>
    <scope>SUBCELLULAR LOCATION</scope>
    <source>
        <strain evidence="15">Canton-S</strain>
    </source>
</reference>
<reference evidence="13" key="2">
    <citation type="journal article" date="2000" name="Science">
        <title>The genome sequence of Drosophila melanogaster.</title>
        <authorList>
            <person name="Adams M.D."/>
            <person name="Celniker S.E."/>
            <person name="Holt R.A."/>
            <person name="Evans C.A."/>
            <person name="Gocayne J.D."/>
            <person name="Amanatides P.G."/>
            <person name="Scherer S.E."/>
            <person name="Li P.W."/>
            <person name="Hoskins R.A."/>
            <person name="Galle R.F."/>
            <person name="George R.A."/>
            <person name="Lewis S.E."/>
            <person name="Richards S."/>
            <person name="Ashburner M."/>
            <person name="Henderson S.N."/>
            <person name="Sutton G.G."/>
            <person name="Wortman J.R."/>
            <person name="Yandell M.D."/>
            <person name="Zhang Q."/>
            <person name="Chen L.X."/>
            <person name="Brandon R.C."/>
            <person name="Rogers Y.-H.C."/>
            <person name="Blazej R.G."/>
            <person name="Champe M."/>
            <person name="Pfeiffer B.D."/>
            <person name="Wan K.H."/>
            <person name="Doyle C."/>
            <person name="Baxter E.G."/>
            <person name="Helt G."/>
            <person name="Nelson C.R."/>
            <person name="Miklos G.L.G."/>
            <person name="Abril J.F."/>
            <person name="Agbayani A."/>
            <person name="An H.-J."/>
            <person name="Andrews-Pfannkoch C."/>
            <person name="Baldwin D."/>
            <person name="Ballew R.M."/>
            <person name="Basu A."/>
            <person name="Baxendale J."/>
            <person name="Bayraktaroglu L."/>
            <person name="Beasley E.M."/>
            <person name="Beeson K.Y."/>
            <person name="Benos P.V."/>
            <person name="Berman B.P."/>
            <person name="Bhandari D."/>
            <person name="Bolshakov S."/>
            <person name="Borkova D."/>
            <person name="Botchan M.R."/>
            <person name="Bouck J."/>
            <person name="Brokstein P."/>
            <person name="Brottier P."/>
            <person name="Burtis K.C."/>
            <person name="Busam D.A."/>
            <person name="Butler H."/>
            <person name="Cadieu E."/>
            <person name="Center A."/>
            <person name="Chandra I."/>
            <person name="Cherry J.M."/>
            <person name="Cawley S."/>
            <person name="Dahlke C."/>
            <person name="Davenport L.B."/>
            <person name="Davies P."/>
            <person name="de Pablos B."/>
            <person name="Delcher A."/>
            <person name="Deng Z."/>
            <person name="Mays A.D."/>
            <person name="Dew I."/>
            <person name="Dietz S.M."/>
            <person name="Dodson K."/>
            <person name="Doup L.E."/>
            <person name="Downes M."/>
            <person name="Dugan-Rocha S."/>
            <person name="Dunkov B.C."/>
            <person name="Dunn P."/>
            <person name="Durbin K.J."/>
            <person name="Evangelista C.C."/>
            <person name="Ferraz C."/>
            <person name="Ferriera S."/>
            <person name="Fleischmann W."/>
            <person name="Fosler C."/>
            <person name="Gabrielian A.E."/>
            <person name="Garg N.S."/>
            <person name="Gelbart W.M."/>
            <person name="Glasser K."/>
            <person name="Glodek A."/>
            <person name="Gong F."/>
            <person name="Gorrell J.H."/>
            <person name="Gu Z."/>
            <person name="Guan P."/>
            <person name="Harris M."/>
            <person name="Harris N.L."/>
            <person name="Harvey D.A."/>
            <person name="Heiman T.J."/>
            <person name="Hernandez J.R."/>
            <person name="Houck J."/>
            <person name="Hostin D."/>
            <person name="Houston K.A."/>
            <person name="Howland T.J."/>
            <person name="Wei M.-H."/>
            <person name="Ibegwam C."/>
            <person name="Jalali M."/>
            <person name="Kalush F."/>
            <person name="Karpen G.H."/>
            <person name="Ke Z."/>
            <person name="Kennison J.A."/>
            <person name="Ketchum K.A."/>
            <person name="Kimmel B.E."/>
            <person name="Kodira C.D."/>
            <person name="Kraft C.L."/>
            <person name="Kravitz S."/>
            <person name="Kulp D."/>
            <person name="Lai Z."/>
            <person name="Lasko P."/>
            <person name="Lei Y."/>
            <person name="Levitsky A.A."/>
            <person name="Li J.H."/>
            <person name="Li Z."/>
            <person name="Liang Y."/>
            <person name="Lin X."/>
            <person name="Liu X."/>
            <person name="Mattei B."/>
            <person name="McIntosh T.C."/>
            <person name="McLeod M.P."/>
            <person name="McPherson D."/>
            <person name="Merkulov G."/>
            <person name="Milshina N.V."/>
            <person name="Mobarry C."/>
            <person name="Morris J."/>
            <person name="Moshrefi A."/>
            <person name="Mount S.M."/>
            <person name="Moy M."/>
            <person name="Murphy B."/>
            <person name="Murphy L."/>
            <person name="Muzny D.M."/>
            <person name="Nelson D.L."/>
            <person name="Nelson D.R."/>
            <person name="Nelson K.A."/>
            <person name="Nixon K."/>
            <person name="Nusskern D.R."/>
            <person name="Pacleb J.M."/>
            <person name="Palazzolo M."/>
            <person name="Pittman G.S."/>
            <person name="Pan S."/>
            <person name="Pollard J."/>
            <person name="Puri V."/>
            <person name="Reese M.G."/>
            <person name="Reinert K."/>
            <person name="Remington K."/>
            <person name="Saunders R.D.C."/>
            <person name="Scheeler F."/>
            <person name="Shen H."/>
            <person name="Shue B.C."/>
            <person name="Siden-Kiamos I."/>
            <person name="Simpson M."/>
            <person name="Skupski M.P."/>
            <person name="Smith T.J."/>
            <person name="Spier E."/>
            <person name="Spradling A.C."/>
            <person name="Stapleton M."/>
            <person name="Strong R."/>
            <person name="Sun E."/>
            <person name="Svirskas R."/>
            <person name="Tector C."/>
            <person name="Turner R."/>
            <person name="Venter E."/>
            <person name="Wang A.H."/>
            <person name="Wang X."/>
            <person name="Wang Z.-Y."/>
            <person name="Wassarman D.A."/>
            <person name="Weinstock G.M."/>
            <person name="Weissenbach J."/>
            <person name="Williams S.M."/>
            <person name="Woodage T."/>
            <person name="Worley K.C."/>
            <person name="Wu D."/>
            <person name="Yang S."/>
            <person name="Yao Q.A."/>
            <person name="Ye J."/>
            <person name="Yeh R.-F."/>
            <person name="Zaveri J.S."/>
            <person name="Zhan M."/>
            <person name="Zhang G."/>
            <person name="Zhao Q."/>
            <person name="Zheng L."/>
            <person name="Zheng X.H."/>
            <person name="Zhong F.N."/>
            <person name="Zhong W."/>
            <person name="Zhou X."/>
            <person name="Zhu S.C."/>
            <person name="Zhu X."/>
            <person name="Smith H.O."/>
            <person name="Gibbs R.A."/>
            <person name="Myers E.W."/>
            <person name="Rubin G.M."/>
            <person name="Venter J.C."/>
        </authorList>
    </citation>
    <scope>NUCLEOTIDE SEQUENCE [LARGE SCALE GENOMIC DNA]</scope>
    <source>
        <strain>Berkeley</strain>
    </source>
</reference>
<reference evidence="12 13" key="3">
    <citation type="journal article" date="2002" name="Genome Biol.">
        <title>Annotation of the Drosophila melanogaster euchromatic genome: a systematic review.</title>
        <authorList>
            <person name="Misra S."/>
            <person name="Crosby M.A."/>
            <person name="Mungall C.J."/>
            <person name="Matthews B.B."/>
            <person name="Campbell K.S."/>
            <person name="Hradecky P."/>
            <person name="Huang Y."/>
            <person name="Kaminker J.S."/>
            <person name="Millburn G.H."/>
            <person name="Prochnik S.E."/>
            <person name="Smith C.D."/>
            <person name="Tupy J.L."/>
            <person name="Whitfield E.J."/>
            <person name="Bayraktaroglu L."/>
            <person name="Berman B.P."/>
            <person name="Bettencourt B.R."/>
            <person name="Celniker S.E."/>
            <person name="de Grey A.D.N.J."/>
            <person name="Drysdale R.A."/>
            <person name="Harris N.L."/>
            <person name="Richter J."/>
            <person name="Russo S."/>
            <person name="Schroeder A.J."/>
            <person name="Shu S.Q."/>
            <person name="Stapleton M."/>
            <person name="Yamada C."/>
            <person name="Ashburner M."/>
            <person name="Gelbart W.M."/>
            <person name="Rubin G.M."/>
            <person name="Lewis S.E."/>
        </authorList>
    </citation>
    <scope>GENOME REANNOTATION</scope>
    <scope>ALTERNATIVE SPLICING</scope>
    <source>
        <strain>Berkeley</strain>
    </source>
</reference>
<reference evidence="12 14" key="4">
    <citation type="submission" date="2003-08" db="EMBL/GenBank/DDBJ databases">
        <authorList>
            <person name="Stapleton M."/>
            <person name="Brokstein P."/>
            <person name="Hong L."/>
            <person name="Agbayani A."/>
            <person name="Carlson J.W."/>
            <person name="Champe M."/>
            <person name="Chavez C."/>
            <person name="Dorsett V."/>
            <person name="Dresnek D."/>
            <person name="Farfan D."/>
            <person name="Frise E."/>
            <person name="George R.A."/>
            <person name="Gonzalez M."/>
            <person name="Guarin H."/>
            <person name="Kronmiller B."/>
            <person name="Li P.W."/>
            <person name="Liao G."/>
            <person name="Miranda A."/>
            <person name="Mungall C.J."/>
            <person name="Nunoo J."/>
            <person name="Pacleb J.M."/>
            <person name="Paragas V."/>
            <person name="Park S."/>
            <person name="Patel S."/>
            <person name="Phouanenavong S."/>
            <person name="Wan K.H."/>
            <person name="Yu C."/>
            <person name="Lewis S.E."/>
            <person name="Rubin G.M."/>
            <person name="Celniker S.E."/>
        </authorList>
    </citation>
    <scope>NUCLEOTIDE SEQUENCE [LARGE SCALE MRNA] (ISOFORMS A AND B)</scope>
    <source>
        <strain evidence="14">Berkeley</strain>
        <tissue>Head</tissue>
        <tissue>Larva</tissue>
        <tissue>Pupae</tissue>
    </source>
</reference>
<reference evidence="12" key="5">
    <citation type="journal article" date="2008" name="J. Proteome Res.">
        <title>Phosphoproteome analysis of Drosophila melanogaster embryos.</title>
        <authorList>
            <person name="Zhai B."/>
            <person name="Villen J."/>
            <person name="Beausoleil S.A."/>
            <person name="Mintseris J."/>
            <person name="Gygi S.P."/>
        </authorList>
    </citation>
    <scope>PHOSPHORYLATION [LARGE SCALE ANALYSIS] AT SER-248; SER-249; SER-250; SER-320; SER-322; SER-845 AND SER-846 (ISOFORM A)</scope>
    <scope>PHOSPHORYLATION [LARGE SCALE ANALYSIS] AT THR-9 AND SER-12 (ISOFORM B)</scope>
    <scope>IDENTIFICATION BY MASS SPECTROMETRY</scope>
    <source>
        <tissue evidence="5">Embryo</tissue>
    </source>
</reference>
<reference key="6">
    <citation type="journal article" date="2015" name="Cell Metab.">
        <title>Glial Glycolysis Is Essential for Neuronal Survival in Drosophila.</title>
        <authorList>
            <person name="Volkenhoff A."/>
            <person name="Weiler A."/>
            <person name="Letzel M."/>
            <person name="Stehling M."/>
            <person name="Klaembt C."/>
            <person name="Schirmeier S."/>
        </authorList>
    </citation>
    <scope>FUNCTION</scope>
    <scope>TISSUE SPECIFICITY</scope>
    <scope>DISRUPTION PHENOTYPE</scope>
</reference>
<reference key="7">
    <citation type="journal article" date="2021" name="Elife">
        <title>Starvation-induced regulation of carbohydrate transport at the blood-brain barrier is TGF-beta-signaling dependent.</title>
        <authorList>
            <person name="Hertenstein H."/>
            <person name="McMullen E."/>
            <person name="Weiler A."/>
            <person name="Volkenhoff A."/>
            <person name="Becker H.M."/>
            <person name="Schirmeier S."/>
        </authorList>
    </citation>
    <scope>FUNCTION</scope>
    <scope>CATALYTIC ACTIVITY</scope>
    <scope>SUBCELLULAR LOCATION</scope>
    <scope>TISSUE SPECIFICITY</scope>
    <scope>INDUCTION BY HYPOGLYCEMIA AND TGF-BETA SIGNALING</scope>
</reference>
<name>TRE11_DROME</name>
<gene>
    <name evidence="16" type="primary">Tret1</name>
    <name evidence="10" type="synonym">Tret1-1</name>
    <name evidence="16" type="ORF">CG30035</name>
</gene>
<comment type="function">
    <text evidence="6 7 8">Low-capacity facilitative transporter for trehalose (PubMed:20035867, PubMed:34032568). Can also transport glucose (PubMed:34032568). Does not transport maltose, sucrose, lactose or fructose (PubMed:20035867, PubMed:34032568). Mediates the bidirectional transfer of trehalose (PubMed:20035867). Responsible for the transport of trehalose synthesized in the fat body and the incorporation of trehalose into other tissues that require a carbon source, thereby regulating trehalose levels in the hemolymph (PubMed:20035867). Required in glial cells of the blood brain barrier to fuel glycolysis but not required in neurons (PubMed:26235423). Neurons rely on the citric acid cycle for their energy needs and utilise alanine and lactate, by-products of glial cell glycolysis released into the hemolymph, as fuel (PubMed:26235423). Increased expression in glial cells of the blood brain barrier during starvation and increased cell surface localization enhances carbohydrate uptake to protect the central nervous system from restricted nutrient availability (PubMed:34032568).</text>
</comment>
<comment type="catalytic activity">
    <reaction evidence="6 8">
        <text>alpha,alpha-trehalose(in) = alpha,alpha-trehalose(out)</text>
        <dbReference type="Rhea" id="RHEA:17629"/>
        <dbReference type="ChEBI" id="CHEBI:16551"/>
    </reaction>
</comment>
<comment type="catalytic activity">
    <reaction evidence="8">
        <text>D-glucose(out) = D-glucose(in)</text>
        <dbReference type="Rhea" id="RHEA:60376"/>
        <dbReference type="ChEBI" id="CHEBI:4167"/>
    </reaction>
</comment>
<comment type="biophysicochemical properties">
    <kinetics>
        <KM evidence="6">10.94 mM for trehalose</KM>
    </kinetics>
</comment>
<comment type="subcellular location">
    <subcellularLocation>
        <location evidence="6 8">Cell membrane</location>
        <topology evidence="1 6">Multi-pass membrane protein</topology>
    </subcellularLocation>
    <subcellularLocation>
        <location evidence="8">Vesicle</location>
    </subcellularLocation>
    <text evidence="8">Levels at the plasma membrane increase upon starvation (PubMed:34032568). Localizes to vesicles positive for Rab7, Rab10, Rab19 and Rab23; efficient localization to the cell surface from cytoplasmic storage vesicles is dependent on Rab10 while protein turnover may be regulated by Rab7 (PubMed:34032568).</text>
</comment>
<comment type="alternative products">
    <event type="alternative splicing"/>
    <isoform>
        <id>A1Z8N1-1</id>
        <name evidence="4 16">A</name>
        <sequence type="displayed"/>
    </isoform>
    <isoform>
        <id>A1Z8N1-2</id>
        <name evidence="4 16">B</name>
        <sequence type="described" ref="VSP_039515 VSP_039516"/>
    </isoform>
</comment>
<comment type="tissue specificity">
    <text evidence="7 8">Expressed in perineurial glia of the outer layer of the nervous system that forms the blood brain barrier (at protein level) (PubMed:26235423, PubMed:34032568). Expressed in the fat body (at protein level) (PubMed:26235423).</text>
</comment>
<comment type="tissue specificity">
    <molecule>Isoform A</molecule>
    <text evidence="7">May be specifically expressed in perineurial glia (at protein level).</text>
</comment>
<comment type="tissue specificity">
    <molecule>Isoform B</molecule>
    <text evidence="7">May be specifically expressed in the fat body (at protein level).</text>
</comment>
<comment type="induction">
    <text evidence="8">In perineurial glia by starvation-induced hypoglycemia, possibly in response to TGF-beta signaling; dependent on the BMP-branch-specific type I receptor tkv/Thickveins and its ligand gbb/glass-bottom boat, which is induced in glial cells upon starvation (PubMed:34032568). Not induced by insulin or adipokinetic hormone signaling, nor by the jeb/Jelly Belly-Alk/Anaplastic lymphoma kinase signaling pathway (PubMed:34032568).</text>
</comment>
<comment type="disruption phenotype">
    <text evidence="7">Pupal lethal (PubMed:26235423). RNAi-mediated knockdown is lethal (PubMed:26235423). Pan-glial specific RNAi-mediated knockdown results in severe locomotor defects (PubMed:26235423). Pan-neuronal specific RNAi-mediated knockdown is viable with no defects (PubMed:26235423).</text>
</comment>
<comment type="similarity">
    <text evidence="1 6">Belongs to the major facilitator superfamily. Sugar transporter (TC 2.A.1.1) family. Trehalose transporter subfamily.</text>
</comment>
<comment type="sequence caution" evidence="12">
    <conflict type="erroneous termination">
        <sequence resource="EMBL-CDS" id="AAO39469"/>
    </conflict>
    <text>Truncated C-terminus.</text>
</comment>
<comment type="sequence caution" evidence="12">
    <conflict type="frameshift">
        <sequence resource="EMBL-CDS" id="AAO39469"/>
    </conflict>
</comment>
<evidence type="ECO:0000255" key="1"/>
<evidence type="ECO:0000255" key="2">
    <source>
        <dbReference type="PROSITE-ProRule" id="PRU00498"/>
    </source>
</evidence>
<evidence type="ECO:0000256" key="3">
    <source>
        <dbReference type="SAM" id="MobiDB-lite"/>
    </source>
</evidence>
<evidence type="ECO:0000269" key="4">
    <source>
    </source>
</evidence>
<evidence type="ECO:0000269" key="5">
    <source>
    </source>
</evidence>
<evidence type="ECO:0000269" key="6">
    <source>
    </source>
</evidence>
<evidence type="ECO:0000269" key="7">
    <source>
    </source>
</evidence>
<evidence type="ECO:0000269" key="8">
    <source>
    </source>
</evidence>
<evidence type="ECO:0000303" key="9">
    <source>
    </source>
</evidence>
<evidence type="ECO:0000303" key="10">
    <source>
    </source>
</evidence>
<evidence type="ECO:0000303" key="11">
    <source ref="4"/>
</evidence>
<evidence type="ECO:0000305" key="12"/>
<evidence type="ECO:0000312" key="13">
    <source>
        <dbReference type="EMBL" id="AAF58632.2"/>
    </source>
</evidence>
<evidence type="ECO:0000312" key="14">
    <source>
        <dbReference type="EMBL" id="AAQ23604.1"/>
    </source>
</evidence>
<evidence type="ECO:0000312" key="15">
    <source>
        <dbReference type="EMBL" id="BAF96746.1"/>
    </source>
</evidence>
<evidence type="ECO:0000312" key="16">
    <source>
        <dbReference type="FlyBase" id="FBgn0050035"/>
    </source>
</evidence>
<evidence type="ECO:0000312" key="17">
    <source>
        <dbReference type="Proteomes" id="UP000000803"/>
    </source>
</evidence>
<evidence type="ECO:0007744" key="18">
    <source>
    </source>
</evidence>